<name>RTCA_SULAC</name>
<proteinExistence type="inferred from homology"/>
<sequence length="335" mass="36732">MIEIDGSFGEGGGQILRTSLTLSSLTKKPFRIYNIRANRPKPGLQRQHLTAVNAVKILTNATVKGDYVGSTELIFSPGDIQEKGDFVFDIGTAGSTTLILQTILPLLLNRKLTVTIKGGTDVPKSPSIDYIRLVFSKVLERIGISFNVELIKRGHYPEGGGEIRISNVRGEPQRFSITEFGQLEGFVGISHVSSLPVHIADRQKSSAEKILRRLKDKIDIRLDVREGEISKGSGICLSAIGKYGIIGADALGERGKRAETVGEEAALKLLEELKTNAAFDSHMGDMLMLYASLYQGEYTASKLTLHSITNEKVIRKFIDIKGEIKGSSPFLFRVQ</sequence>
<feature type="chain" id="PRO_0000156435" description="RNA 3'-terminal phosphate cyclase">
    <location>
        <begin position="1"/>
        <end position="335"/>
    </location>
</feature>
<feature type="active site" description="Tele-AMP-histidine intermediate" evidence="1">
    <location>
        <position position="306"/>
    </location>
</feature>
<feature type="binding site" evidence="1">
    <location>
        <position position="101"/>
    </location>
    <ligand>
        <name>ATP</name>
        <dbReference type="ChEBI" id="CHEBI:30616"/>
    </ligand>
</feature>
<feature type="binding site" evidence="1">
    <location>
        <begin position="282"/>
        <end position="285"/>
    </location>
    <ligand>
        <name>ATP</name>
        <dbReference type="ChEBI" id="CHEBI:30616"/>
    </ligand>
</feature>
<organism>
    <name type="scientific">Sulfolobus acidocaldarius (strain ATCC 33909 / DSM 639 / JCM 8929 / NBRC 15157 / NCIMB 11770)</name>
    <dbReference type="NCBI Taxonomy" id="330779"/>
    <lineage>
        <taxon>Archaea</taxon>
        <taxon>Thermoproteota</taxon>
        <taxon>Thermoprotei</taxon>
        <taxon>Sulfolobales</taxon>
        <taxon>Sulfolobaceae</taxon>
        <taxon>Sulfolobus</taxon>
    </lineage>
</organism>
<dbReference type="EC" id="6.5.1.4" evidence="1"/>
<dbReference type="EMBL" id="CP000077">
    <property type="protein sequence ID" value="AAY79951.1"/>
    <property type="molecule type" value="Genomic_DNA"/>
</dbReference>
<dbReference type="RefSeq" id="WP_011277453.1">
    <property type="nucleotide sequence ID" value="NC_007181.1"/>
</dbReference>
<dbReference type="SMR" id="Q4JB78"/>
<dbReference type="STRING" id="330779.Saci_0556"/>
<dbReference type="GeneID" id="14551081"/>
<dbReference type="GeneID" id="78440901"/>
<dbReference type="KEGG" id="sai:Saci_0556"/>
<dbReference type="PATRIC" id="fig|330779.12.peg.540"/>
<dbReference type="eggNOG" id="arCOG04125">
    <property type="taxonomic scope" value="Archaea"/>
</dbReference>
<dbReference type="HOGENOM" id="CLU_027882_0_0_2"/>
<dbReference type="Proteomes" id="UP000001018">
    <property type="component" value="Chromosome"/>
</dbReference>
<dbReference type="GO" id="GO:0005737">
    <property type="term" value="C:cytoplasm"/>
    <property type="evidence" value="ECO:0007669"/>
    <property type="project" value="UniProtKB-SubCell"/>
</dbReference>
<dbReference type="GO" id="GO:0005524">
    <property type="term" value="F:ATP binding"/>
    <property type="evidence" value="ECO:0007669"/>
    <property type="project" value="UniProtKB-KW"/>
</dbReference>
<dbReference type="GO" id="GO:0003963">
    <property type="term" value="F:RNA-3'-phosphate cyclase activity"/>
    <property type="evidence" value="ECO:0007669"/>
    <property type="project" value="UniProtKB-UniRule"/>
</dbReference>
<dbReference type="GO" id="GO:0006396">
    <property type="term" value="P:RNA processing"/>
    <property type="evidence" value="ECO:0007669"/>
    <property type="project" value="InterPro"/>
</dbReference>
<dbReference type="CDD" id="cd00874">
    <property type="entry name" value="RNA_Cyclase_Class_II"/>
    <property type="match status" value="1"/>
</dbReference>
<dbReference type="FunFam" id="3.30.360.20:FF:000002">
    <property type="entry name" value="RNA terminal phosphate cyclase-like 1"/>
    <property type="match status" value="1"/>
</dbReference>
<dbReference type="Gene3D" id="3.65.10.20">
    <property type="entry name" value="RNA 3'-terminal phosphate cyclase domain"/>
    <property type="match status" value="1"/>
</dbReference>
<dbReference type="Gene3D" id="3.30.360.20">
    <property type="entry name" value="RNA 3'-terminal phosphate cyclase, insert domain"/>
    <property type="match status" value="1"/>
</dbReference>
<dbReference type="HAMAP" id="MF_00200">
    <property type="entry name" value="RTC"/>
    <property type="match status" value="1"/>
</dbReference>
<dbReference type="InterPro" id="IPR013791">
    <property type="entry name" value="RNA3'-term_phos_cycl_insert"/>
</dbReference>
<dbReference type="InterPro" id="IPR023797">
    <property type="entry name" value="RNA3'_phos_cyclase_dom"/>
</dbReference>
<dbReference type="InterPro" id="IPR037136">
    <property type="entry name" value="RNA3'_phos_cyclase_dom_sf"/>
</dbReference>
<dbReference type="InterPro" id="IPR000228">
    <property type="entry name" value="RNA3'_term_phos_cyc"/>
</dbReference>
<dbReference type="InterPro" id="IPR017770">
    <property type="entry name" value="RNA3'_term_phos_cyc_type_1"/>
</dbReference>
<dbReference type="InterPro" id="IPR020719">
    <property type="entry name" value="RNA3'_term_phos_cycl-like_CS"/>
</dbReference>
<dbReference type="InterPro" id="IPR013792">
    <property type="entry name" value="RNA3'P_cycl/enolpyr_Trfase_a/b"/>
</dbReference>
<dbReference type="InterPro" id="IPR036553">
    <property type="entry name" value="RPTC_insert"/>
</dbReference>
<dbReference type="NCBIfam" id="TIGR03399">
    <property type="entry name" value="RNA_3prim_cycl"/>
    <property type="match status" value="1"/>
</dbReference>
<dbReference type="PANTHER" id="PTHR11096">
    <property type="entry name" value="RNA 3' TERMINAL PHOSPHATE CYCLASE"/>
    <property type="match status" value="1"/>
</dbReference>
<dbReference type="PANTHER" id="PTHR11096:SF0">
    <property type="entry name" value="RNA 3'-TERMINAL PHOSPHATE CYCLASE"/>
    <property type="match status" value="1"/>
</dbReference>
<dbReference type="Pfam" id="PF01137">
    <property type="entry name" value="RTC"/>
    <property type="match status" value="1"/>
</dbReference>
<dbReference type="Pfam" id="PF05189">
    <property type="entry name" value="RTC_insert"/>
    <property type="match status" value="1"/>
</dbReference>
<dbReference type="PIRSF" id="PIRSF005378">
    <property type="entry name" value="RNA3'_term_phos_cycl_euk"/>
    <property type="match status" value="1"/>
</dbReference>
<dbReference type="SUPFAM" id="SSF55205">
    <property type="entry name" value="EPT/RTPC-like"/>
    <property type="match status" value="1"/>
</dbReference>
<dbReference type="PROSITE" id="PS01287">
    <property type="entry name" value="RTC"/>
    <property type="match status" value="1"/>
</dbReference>
<evidence type="ECO:0000255" key="1">
    <source>
        <dbReference type="HAMAP-Rule" id="MF_00200"/>
    </source>
</evidence>
<protein>
    <recommendedName>
        <fullName evidence="1">RNA 3'-terminal phosphate cyclase</fullName>
        <shortName evidence="1">RNA cyclase</shortName>
        <shortName evidence="1">RNA-3'-phosphate cyclase</shortName>
        <ecNumber evidence="1">6.5.1.4</ecNumber>
    </recommendedName>
</protein>
<keyword id="KW-0067">ATP-binding</keyword>
<keyword id="KW-0963">Cytoplasm</keyword>
<keyword id="KW-0436">Ligase</keyword>
<keyword id="KW-0547">Nucleotide-binding</keyword>
<keyword id="KW-1185">Reference proteome</keyword>
<gene>
    <name evidence="1" type="primary">rtcA</name>
    <name type="ordered locus">Saci_0556</name>
</gene>
<comment type="function">
    <text evidence="1">Catalyzes the conversion of 3'-phosphate to a 2',3'-cyclic phosphodiester at the end of RNA. The mechanism of action of the enzyme occurs in 3 steps: (A) adenylation of the enzyme by ATP; (B) transfer of adenylate to an RNA-N3'P to produce RNA-N3'PP5'A; (C) and attack of the adjacent 2'-hydroxyl on the 3'-phosphorus in the diester linkage to produce the cyclic end product. The biological role of this enzyme is unknown but it is likely to function in some aspects of cellular RNA processing.</text>
</comment>
<comment type="catalytic activity">
    <reaction evidence="1">
        <text>a 3'-end 3'-phospho-ribonucleotide-RNA + ATP = a 3'-end 2',3'-cyclophospho-ribonucleotide-RNA + AMP + diphosphate</text>
        <dbReference type="Rhea" id="RHEA:23976"/>
        <dbReference type="Rhea" id="RHEA-COMP:10463"/>
        <dbReference type="Rhea" id="RHEA-COMP:10464"/>
        <dbReference type="ChEBI" id="CHEBI:30616"/>
        <dbReference type="ChEBI" id="CHEBI:33019"/>
        <dbReference type="ChEBI" id="CHEBI:83062"/>
        <dbReference type="ChEBI" id="CHEBI:83064"/>
        <dbReference type="ChEBI" id="CHEBI:456215"/>
        <dbReference type="EC" id="6.5.1.4"/>
    </reaction>
</comment>
<comment type="subcellular location">
    <subcellularLocation>
        <location evidence="1">Cytoplasm</location>
    </subcellularLocation>
</comment>
<comment type="similarity">
    <text evidence="1">Belongs to the RNA 3'-terminal cyclase family. Type 1 subfamily.</text>
</comment>
<accession>Q4JB78</accession>
<reference key="1">
    <citation type="journal article" date="2005" name="J. Bacteriol.">
        <title>The genome of Sulfolobus acidocaldarius, a model organism of the Crenarchaeota.</title>
        <authorList>
            <person name="Chen L."/>
            <person name="Bruegger K."/>
            <person name="Skovgaard M."/>
            <person name="Redder P."/>
            <person name="She Q."/>
            <person name="Torarinsson E."/>
            <person name="Greve B."/>
            <person name="Awayez M."/>
            <person name="Zibat A."/>
            <person name="Klenk H.-P."/>
            <person name="Garrett R.A."/>
        </authorList>
    </citation>
    <scope>NUCLEOTIDE SEQUENCE [LARGE SCALE GENOMIC DNA]</scope>
    <source>
        <strain>ATCC 33909 / DSM 639 / JCM 8929 / NBRC 15157 / NCIMB 11770</strain>
    </source>
</reference>